<dbReference type="EMBL" id="AL123456">
    <property type="protein sequence ID" value="CCP46419.1"/>
    <property type="molecule type" value="Genomic_DNA"/>
</dbReference>
<dbReference type="PIR" id="E70954">
    <property type="entry name" value="E70954"/>
</dbReference>
<dbReference type="RefSeq" id="WP_003419511.1">
    <property type="nucleotide sequence ID" value="NZ_NVQJ01000056.1"/>
</dbReference>
<dbReference type="RefSeq" id="YP_177995.1">
    <property type="nucleotide sequence ID" value="NC_000962.3"/>
</dbReference>
<dbReference type="PDB" id="3WDB">
    <property type="method" value="X-ray"/>
    <property type="resolution" value="1.37 A"/>
    <property type="chains" value="A=1-145"/>
</dbReference>
<dbReference type="PDB" id="3WDC">
    <property type="method" value="X-ray"/>
    <property type="resolution" value="1.18 A"/>
    <property type="chains" value="A=1-145"/>
</dbReference>
<dbReference type="PDB" id="3WDD">
    <property type="method" value="X-ray"/>
    <property type="resolution" value="1.18 A"/>
    <property type="chains" value="A=3-145"/>
</dbReference>
<dbReference type="PDB" id="3WDE">
    <property type="method" value="X-ray"/>
    <property type="resolution" value="1.44 A"/>
    <property type="chains" value="A=1-145"/>
</dbReference>
<dbReference type="PDB" id="6CN8">
    <property type="method" value="X-ray"/>
    <property type="resolution" value="1.40 A"/>
    <property type="chains" value="A=1-145"/>
</dbReference>
<dbReference type="PDB" id="6PBA">
    <property type="method" value="X-ray"/>
    <property type="resolution" value="1.77 A"/>
    <property type="chains" value="A=1-145"/>
</dbReference>
<dbReference type="PDB" id="6PBQ">
    <property type="method" value="X-ray"/>
    <property type="resolution" value="1.60 A"/>
    <property type="chains" value="A=1-145"/>
</dbReference>
<dbReference type="PDB" id="6PBS">
    <property type="method" value="X-ray"/>
    <property type="resolution" value="2.50 A"/>
    <property type="chains" value="A/B/C/G/I/K/M/O/T/W/Y/e=1-145"/>
</dbReference>
<dbReference type="PDB" id="6UCR">
    <property type="method" value="X-ray"/>
    <property type="resolution" value="2.30 A"/>
    <property type="chains" value="A=1-145"/>
</dbReference>
<dbReference type="PDB" id="7AA4">
    <property type="method" value="X-ray"/>
    <property type="resolution" value="1.68 A"/>
    <property type="chains" value="A=1-148"/>
</dbReference>
<dbReference type="PDB" id="8A8U">
    <property type="method" value="EM"/>
    <property type="resolution" value="3.62 A"/>
    <property type="chains" value="A/B/C/D/E/F=1-848"/>
</dbReference>
<dbReference type="PDB" id="8A8V">
    <property type="method" value="EM"/>
    <property type="resolution" value="3.34 A"/>
    <property type="chains" value="A/B/C/D/E/F=1-848"/>
</dbReference>
<dbReference type="PDB" id="8A8W">
    <property type="method" value="EM"/>
    <property type="resolution" value="4.29 A"/>
    <property type="chains" value="A/B/C/D/E/F=1-848"/>
</dbReference>
<dbReference type="PDB" id="8B9U">
    <property type="method" value="X-ray"/>
    <property type="resolution" value="2.25 A"/>
    <property type="chains" value="A/B=1-144"/>
</dbReference>
<dbReference type="PDB" id="8IBO">
    <property type="method" value="X-ray"/>
    <property type="resolution" value="1.83 A"/>
    <property type="chains" value="A=1-142"/>
</dbReference>
<dbReference type="PDB" id="8IBP">
    <property type="method" value="X-ray"/>
    <property type="resolution" value="1.45 A"/>
    <property type="chains" value="A=1-143"/>
</dbReference>
<dbReference type="PDBsum" id="3WDB"/>
<dbReference type="PDBsum" id="3WDC"/>
<dbReference type="PDBsum" id="3WDD"/>
<dbReference type="PDBsum" id="3WDE"/>
<dbReference type="PDBsum" id="6CN8"/>
<dbReference type="PDBsum" id="6PBA"/>
<dbReference type="PDBsum" id="6PBQ"/>
<dbReference type="PDBsum" id="6PBS"/>
<dbReference type="PDBsum" id="6UCR"/>
<dbReference type="PDBsum" id="7AA4"/>
<dbReference type="PDBsum" id="8A8U"/>
<dbReference type="PDBsum" id="8A8V"/>
<dbReference type="PDBsum" id="8A8W"/>
<dbReference type="PDBsum" id="8B9U"/>
<dbReference type="PDBsum" id="8IBO"/>
<dbReference type="PDBsum" id="8IBP"/>
<dbReference type="EMDB" id="EMD-15240"/>
<dbReference type="EMDB" id="EMD-15241"/>
<dbReference type="EMDB" id="EMD-15242"/>
<dbReference type="SASBDB" id="P9WPC9"/>
<dbReference type="SMR" id="P9WPC9"/>
<dbReference type="DIP" id="DIP-61228N"/>
<dbReference type="FunCoup" id="P9WPC9">
    <property type="interactions" value="162"/>
</dbReference>
<dbReference type="IntAct" id="P9WPC9">
    <property type="interactions" value="3"/>
</dbReference>
<dbReference type="STRING" id="83332.Rv3596c"/>
<dbReference type="BindingDB" id="P9WPC9"/>
<dbReference type="ChEMBL" id="CHEMBL4630874"/>
<dbReference type="PaxDb" id="83332-Rv3596c"/>
<dbReference type="GeneID" id="45427583"/>
<dbReference type="GeneID" id="885104"/>
<dbReference type="KEGG" id="mtu:Rv3596c"/>
<dbReference type="KEGG" id="mtv:RVBD_3596c"/>
<dbReference type="TubercuList" id="Rv3596c"/>
<dbReference type="eggNOG" id="COG0542">
    <property type="taxonomic scope" value="Bacteria"/>
</dbReference>
<dbReference type="InParanoid" id="P9WPC9"/>
<dbReference type="OrthoDB" id="9803641at2"/>
<dbReference type="PhylomeDB" id="P9WPC9"/>
<dbReference type="BRENDA" id="3.4.21.92">
    <property type="organism ID" value="3445"/>
</dbReference>
<dbReference type="EvolutionaryTrace" id="P9WPC9"/>
<dbReference type="Proteomes" id="UP000001584">
    <property type="component" value="Chromosome"/>
</dbReference>
<dbReference type="GO" id="GO:0005829">
    <property type="term" value="C:cytosol"/>
    <property type="evidence" value="ECO:0007005"/>
    <property type="project" value="MTBBASE"/>
</dbReference>
<dbReference type="GO" id="GO:0009274">
    <property type="term" value="C:peptidoglycan-based cell wall"/>
    <property type="evidence" value="ECO:0007005"/>
    <property type="project" value="MTBBASE"/>
</dbReference>
<dbReference type="GO" id="GO:0005886">
    <property type="term" value="C:plasma membrane"/>
    <property type="evidence" value="ECO:0007005"/>
    <property type="project" value="MTBBASE"/>
</dbReference>
<dbReference type="GO" id="GO:0005524">
    <property type="term" value="F:ATP binding"/>
    <property type="evidence" value="ECO:0007669"/>
    <property type="project" value="UniProtKB-KW"/>
</dbReference>
<dbReference type="GO" id="GO:0016887">
    <property type="term" value="F:ATP hydrolysis activity"/>
    <property type="evidence" value="ECO:0000314"/>
    <property type="project" value="MTBBASE"/>
</dbReference>
<dbReference type="GO" id="GO:0044183">
    <property type="term" value="F:protein folding chaperone"/>
    <property type="evidence" value="ECO:0000315"/>
    <property type="project" value="MTBBASE"/>
</dbReference>
<dbReference type="GO" id="GO:0042803">
    <property type="term" value="F:protein homodimerization activity"/>
    <property type="evidence" value="ECO:0000353"/>
    <property type="project" value="MTBBASE"/>
</dbReference>
<dbReference type="CDD" id="cd00009">
    <property type="entry name" value="AAA"/>
    <property type="match status" value="1"/>
</dbReference>
<dbReference type="CDD" id="cd19499">
    <property type="entry name" value="RecA-like_ClpB_Hsp104-like"/>
    <property type="match status" value="1"/>
</dbReference>
<dbReference type="FunFam" id="1.10.8.60:FF:000017">
    <property type="entry name" value="ATP-dependent chaperone ClpB"/>
    <property type="match status" value="1"/>
</dbReference>
<dbReference type="FunFam" id="1.10.1780.10:FF:000001">
    <property type="entry name" value="ATP-dependent Clp protease ATP-binding subunit"/>
    <property type="match status" value="1"/>
</dbReference>
<dbReference type="FunFam" id="1.10.8.60:FF:000011">
    <property type="entry name" value="ATP-dependent Clp protease ATP-binding subunit"/>
    <property type="match status" value="1"/>
</dbReference>
<dbReference type="FunFam" id="4.10.860.10:FF:000004">
    <property type="entry name" value="ATP-dependent Clp protease ATP-binding subunit"/>
    <property type="match status" value="1"/>
</dbReference>
<dbReference type="FunFam" id="3.40.50.300:FF:000025">
    <property type="entry name" value="ATP-dependent Clp protease subunit"/>
    <property type="match status" value="1"/>
</dbReference>
<dbReference type="FunFam" id="3.40.50.300:FF:000010">
    <property type="entry name" value="Chaperone clpB 1, putative"/>
    <property type="match status" value="1"/>
</dbReference>
<dbReference type="Gene3D" id="1.10.8.60">
    <property type="match status" value="2"/>
</dbReference>
<dbReference type="Gene3D" id="1.10.1780.10">
    <property type="entry name" value="Clp, N-terminal domain"/>
    <property type="match status" value="1"/>
</dbReference>
<dbReference type="Gene3D" id="3.40.50.300">
    <property type="entry name" value="P-loop containing nucleotide triphosphate hydrolases"/>
    <property type="match status" value="2"/>
</dbReference>
<dbReference type="Gene3D" id="4.10.860.10">
    <property type="entry name" value="UVR domain"/>
    <property type="match status" value="1"/>
</dbReference>
<dbReference type="InterPro" id="IPR003593">
    <property type="entry name" value="AAA+_ATPase"/>
</dbReference>
<dbReference type="InterPro" id="IPR003959">
    <property type="entry name" value="ATPase_AAA_core"/>
</dbReference>
<dbReference type="InterPro" id="IPR019489">
    <property type="entry name" value="Clp_ATPase_C"/>
</dbReference>
<dbReference type="InterPro" id="IPR036628">
    <property type="entry name" value="Clp_N_dom_sf"/>
</dbReference>
<dbReference type="InterPro" id="IPR004176">
    <property type="entry name" value="Clp_R_dom"/>
</dbReference>
<dbReference type="InterPro" id="IPR001270">
    <property type="entry name" value="ClpA/B"/>
</dbReference>
<dbReference type="InterPro" id="IPR018368">
    <property type="entry name" value="ClpA/B_CS1"/>
</dbReference>
<dbReference type="InterPro" id="IPR041546">
    <property type="entry name" value="ClpA/ClpB_AAA_lid"/>
</dbReference>
<dbReference type="InterPro" id="IPR050130">
    <property type="entry name" value="ClpA_ClpB"/>
</dbReference>
<dbReference type="InterPro" id="IPR027417">
    <property type="entry name" value="P-loop_NTPase"/>
</dbReference>
<dbReference type="InterPro" id="IPR001943">
    <property type="entry name" value="UVR_dom"/>
</dbReference>
<dbReference type="PANTHER" id="PTHR11638">
    <property type="entry name" value="ATP-DEPENDENT CLP PROTEASE"/>
    <property type="match status" value="1"/>
</dbReference>
<dbReference type="PANTHER" id="PTHR11638:SF18">
    <property type="entry name" value="HEAT SHOCK PROTEIN 104"/>
    <property type="match status" value="1"/>
</dbReference>
<dbReference type="Pfam" id="PF00004">
    <property type="entry name" value="AAA"/>
    <property type="match status" value="1"/>
</dbReference>
<dbReference type="Pfam" id="PF07724">
    <property type="entry name" value="AAA_2"/>
    <property type="match status" value="1"/>
</dbReference>
<dbReference type="Pfam" id="PF17871">
    <property type="entry name" value="AAA_lid_9"/>
    <property type="match status" value="1"/>
</dbReference>
<dbReference type="Pfam" id="PF02861">
    <property type="entry name" value="Clp_N"/>
    <property type="match status" value="2"/>
</dbReference>
<dbReference type="Pfam" id="PF10431">
    <property type="entry name" value="ClpB_D2-small"/>
    <property type="match status" value="1"/>
</dbReference>
<dbReference type="PRINTS" id="PR00300">
    <property type="entry name" value="CLPPROTEASEA"/>
</dbReference>
<dbReference type="SMART" id="SM00382">
    <property type="entry name" value="AAA"/>
    <property type="match status" value="2"/>
</dbReference>
<dbReference type="SMART" id="SM01086">
    <property type="entry name" value="ClpB_D2-small"/>
    <property type="match status" value="1"/>
</dbReference>
<dbReference type="SUPFAM" id="SSF81923">
    <property type="entry name" value="Double Clp-N motif"/>
    <property type="match status" value="1"/>
</dbReference>
<dbReference type="SUPFAM" id="SSF52540">
    <property type="entry name" value="P-loop containing nucleoside triphosphate hydrolases"/>
    <property type="match status" value="2"/>
</dbReference>
<dbReference type="PROSITE" id="PS51903">
    <property type="entry name" value="CLP_R"/>
    <property type="match status" value="1"/>
</dbReference>
<dbReference type="PROSITE" id="PS00870">
    <property type="entry name" value="CLPAB_1"/>
    <property type="match status" value="1"/>
</dbReference>
<dbReference type="PROSITE" id="PS50151">
    <property type="entry name" value="UVR"/>
    <property type="match status" value="1"/>
</dbReference>
<accession>P9WPC9</accession>
<accession>L0TD96</accession>
<accession>O06286</accession>
<accession>P0A522</accession>
<comment type="function">
    <text evidence="1 6">ATP-dependent specificity component of the Clp protease. It directs the protease to specific substrates. Can perform chaperone functions in the absence of ClpP (By similarity). Degrades anti-sigma-E factor RseA in the presence of ClpP2.</text>
</comment>
<comment type="interaction">
    <interactant intactId="EBI-1254029">
        <id>P9WPC9</id>
    </interactant>
    <interactant intactId="EBI-1253936">
        <id>P9WNK5</id>
        <label>esxB</label>
    </interactant>
    <organismsDiffer>false</organismsDiffer>
    <experiments>3</experiments>
</comment>
<comment type="disruption phenotype">
    <text evidence="6">Depletion experiments (using anti-sense RNA) stops degradation of anti-sigma-E factor RseA.</text>
</comment>
<comment type="similarity">
    <text evidence="7">Belongs to the ClpA/ClpB family. ClpC subfamily.</text>
</comment>
<keyword id="KW-0002">3D-structure</keyword>
<keyword id="KW-0067">ATP-binding</keyword>
<keyword id="KW-0143">Chaperone</keyword>
<keyword id="KW-0547">Nucleotide-binding</keyword>
<keyword id="KW-1185">Reference proteome</keyword>
<keyword id="KW-0677">Repeat</keyword>
<evidence type="ECO:0000250" key="1"/>
<evidence type="ECO:0000255" key="2"/>
<evidence type="ECO:0000255" key="3">
    <source>
        <dbReference type="PROSITE-ProRule" id="PRU00217"/>
    </source>
</evidence>
<evidence type="ECO:0000255" key="4">
    <source>
        <dbReference type="PROSITE-ProRule" id="PRU01251"/>
    </source>
</evidence>
<evidence type="ECO:0000256" key="5">
    <source>
        <dbReference type="SAM" id="MobiDB-lite"/>
    </source>
</evidence>
<evidence type="ECO:0000269" key="6">
    <source>
    </source>
</evidence>
<evidence type="ECO:0000305" key="7"/>
<evidence type="ECO:0007829" key="8">
    <source>
        <dbReference type="PDB" id="3WDC"/>
    </source>
</evidence>
<evidence type="ECO:0007829" key="9">
    <source>
        <dbReference type="PDB" id="8A8V"/>
    </source>
</evidence>
<feature type="chain" id="PRO_0000191236" description="ATP-dependent Clp protease ATP-binding subunit ClpC1">
    <location>
        <begin position="1"/>
        <end position="848"/>
    </location>
</feature>
<feature type="domain" description="Clp R" evidence="4">
    <location>
        <begin position="2"/>
        <end position="144"/>
    </location>
</feature>
<feature type="domain" description="UVR" evidence="3">
    <location>
        <begin position="425"/>
        <end position="460"/>
    </location>
</feature>
<feature type="region of interest" description="Repeat 1" evidence="4">
    <location>
        <begin position="5"/>
        <end position="70"/>
    </location>
</feature>
<feature type="region of interest" description="Repeat 2" evidence="4">
    <location>
        <begin position="80"/>
        <end position="144"/>
    </location>
</feature>
<feature type="region of interest" description="I">
    <location>
        <begin position="171"/>
        <end position="418"/>
    </location>
</feature>
<feature type="region of interest" description="II">
    <location>
        <begin position="479"/>
        <end position="670"/>
    </location>
</feature>
<feature type="region of interest" description="Disordered" evidence="5">
    <location>
        <begin position="821"/>
        <end position="848"/>
    </location>
</feature>
<feature type="binding site" evidence="2">
    <location>
        <begin position="216"/>
        <end position="223"/>
    </location>
    <ligand>
        <name>ATP</name>
        <dbReference type="ChEBI" id="CHEBI:30616"/>
    </ligand>
</feature>
<feature type="binding site" evidence="2">
    <location>
        <begin position="553"/>
        <end position="560"/>
    </location>
    <ligand>
        <name>ATP</name>
        <dbReference type="ChEBI" id="CHEBI:30616"/>
    </ligand>
</feature>
<feature type="helix" evidence="8">
    <location>
        <begin position="2"/>
        <end position="4"/>
    </location>
</feature>
<feature type="helix" evidence="8">
    <location>
        <begin position="7"/>
        <end position="22"/>
    </location>
</feature>
<feature type="strand" evidence="8">
    <location>
        <begin position="26"/>
        <end position="28"/>
    </location>
</feature>
<feature type="helix" evidence="8">
    <location>
        <begin position="30"/>
        <end position="40"/>
    </location>
</feature>
<feature type="helix" evidence="8">
    <location>
        <begin position="44"/>
        <end position="50"/>
    </location>
</feature>
<feature type="turn" evidence="8">
    <location>
        <begin position="51"/>
        <end position="53"/>
    </location>
</feature>
<feature type="helix" evidence="8">
    <location>
        <begin position="56"/>
        <end position="66"/>
    </location>
</feature>
<feature type="helix" evidence="8">
    <location>
        <begin position="82"/>
        <end position="97"/>
    </location>
</feature>
<feature type="strand" evidence="8">
    <location>
        <begin position="101"/>
        <end position="103"/>
    </location>
</feature>
<feature type="helix" evidence="8">
    <location>
        <begin position="105"/>
        <end position="115"/>
    </location>
</feature>
<feature type="helix" evidence="8">
    <location>
        <begin position="119"/>
        <end position="126"/>
    </location>
</feature>
<feature type="helix" evidence="8">
    <location>
        <begin position="131"/>
        <end position="145"/>
    </location>
</feature>
<feature type="turn" evidence="9">
    <location>
        <begin position="169"/>
        <end position="174"/>
    </location>
</feature>
<feature type="helix" evidence="9">
    <location>
        <begin position="178"/>
        <end position="184"/>
    </location>
</feature>
<feature type="helix" evidence="9">
    <location>
        <begin position="194"/>
        <end position="204"/>
    </location>
</feature>
<feature type="strand" evidence="9">
    <location>
        <begin position="212"/>
        <end position="215"/>
    </location>
</feature>
<feature type="helix" evidence="9">
    <location>
        <begin position="222"/>
        <end position="235"/>
    </location>
</feature>
<feature type="helix" evidence="9">
    <location>
        <begin position="240"/>
        <end position="242"/>
    </location>
</feature>
<feature type="strand" evidence="9">
    <location>
        <begin position="246"/>
        <end position="250"/>
    </location>
</feature>
<feature type="helix" evidence="9">
    <location>
        <begin position="253"/>
        <end position="256"/>
    </location>
</feature>
<feature type="strand" evidence="9">
    <location>
        <begin position="261"/>
        <end position="263"/>
    </location>
</feature>
<feature type="helix" evidence="9">
    <location>
        <begin position="264"/>
        <end position="279"/>
    </location>
</feature>
<feature type="strand" evidence="9">
    <location>
        <begin position="282"/>
        <end position="287"/>
    </location>
</feature>
<feature type="helix" evidence="9">
    <location>
        <begin position="291"/>
        <end position="294"/>
    </location>
</feature>
<feature type="strand" evidence="9">
    <location>
        <begin position="295"/>
        <end position="297"/>
    </location>
</feature>
<feature type="strand" evidence="9">
    <location>
        <begin position="299"/>
        <end position="302"/>
    </location>
</feature>
<feature type="helix" evidence="9">
    <location>
        <begin position="304"/>
        <end position="312"/>
    </location>
</feature>
<feature type="turn" evidence="9">
    <location>
        <begin position="313"/>
        <end position="315"/>
    </location>
</feature>
<feature type="strand" evidence="9">
    <location>
        <begin position="319"/>
        <end position="323"/>
    </location>
</feature>
<feature type="helix" evidence="9">
    <location>
        <begin position="325"/>
        <end position="331"/>
    </location>
</feature>
<feature type="turn" evidence="9">
    <location>
        <begin position="332"/>
        <end position="334"/>
    </location>
</feature>
<feature type="helix" evidence="9">
    <location>
        <begin position="336"/>
        <end position="339"/>
    </location>
</feature>
<feature type="strand" evidence="9">
    <location>
        <begin position="342"/>
        <end position="346"/>
    </location>
</feature>
<feature type="helix" evidence="9">
    <location>
        <begin position="352"/>
        <end position="370"/>
    </location>
</feature>
<feature type="helix" evidence="9">
    <location>
        <begin position="376"/>
        <end position="389"/>
    </location>
</feature>
<feature type="helix" evidence="9">
    <location>
        <begin position="397"/>
        <end position="414"/>
    </location>
</feature>
<feature type="helix" evidence="9">
    <location>
        <begin position="481"/>
        <end position="492"/>
    </location>
</feature>
<feature type="helix" evidence="9">
    <location>
        <begin position="496"/>
        <end position="499"/>
    </location>
</feature>
<feature type="helix" evidence="9">
    <location>
        <begin position="503"/>
        <end position="508"/>
    </location>
</feature>
<feature type="helix" evidence="9">
    <location>
        <begin position="510"/>
        <end position="515"/>
    </location>
</feature>
<feature type="helix" evidence="9">
    <location>
        <begin position="522"/>
        <end position="536"/>
    </location>
</feature>
<feature type="strand" evidence="9">
    <location>
        <begin position="546"/>
        <end position="553"/>
    </location>
</feature>
<feature type="helix" evidence="9">
    <location>
        <begin position="559"/>
        <end position="571"/>
    </location>
</feature>
<feature type="strand" evidence="9">
    <location>
        <begin position="577"/>
        <end position="581"/>
    </location>
</feature>
<feature type="helix" evidence="9">
    <location>
        <begin position="588"/>
        <end position="594"/>
    </location>
</feature>
<feature type="helix" evidence="9">
    <location>
        <begin position="609"/>
        <end position="616"/>
    </location>
</feature>
<feature type="strand" evidence="9">
    <location>
        <begin position="621"/>
        <end position="625"/>
    </location>
</feature>
<feature type="helix" evidence="9">
    <location>
        <begin position="632"/>
        <end position="644"/>
    </location>
</feature>
<feature type="strand" evidence="9">
    <location>
        <begin position="646"/>
        <end position="648"/>
    </location>
</feature>
<feature type="strand" evidence="9">
    <location>
        <begin position="654"/>
        <end position="656"/>
    </location>
</feature>
<feature type="strand" evidence="9">
    <location>
        <begin position="661"/>
        <end position="665"/>
    </location>
</feature>
<feature type="helix" evidence="9">
    <location>
        <begin position="690"/>
        <end position="704"/>
    </location>
</feature>
<feature type="helix" evidence="9">
    <location>
        <begin position="707"/>
        <end position="712"/>
    </location>
</feature>
<feature type="strand" evidence="9">
    <location>
        <begin position="715"/>
        <end position="718"/>
    </location>
</feature>
<feature type="helix" evidence="9">
    <location>
        <begin position="724"/>
        <end position="742"/>
    </location>
</feature>
<feature type="helix" evidence="9">
    <location>
        <begin position="743"/>
        <end position="745"/>
    </location>
</feature>
<feature type="strand" evidence="9">
    <location>
        <begin position="748"/>
        <end position="751"/>
    </location>
</feature>
<feature type="helix" evidence="9">
    <location>
        <begin position="753"/>
        <end position="763"/>
    </location>
</feature>
<feature type="turn" evidence="9">
    <location>
        <begin position="766"/>
        <end position="768"/>
    </location>
</feature>
<feature type="helix" evidence="9">
    <location>
        <begin position="773"/>
        <end position="779"/>
    </location>
</feature>
<feature type="helix" evidence="9">
    <location>
        <begin position="782"/>
        <end position="790"/>
    </location>
</feature>
<feature type="strand" evidence="9">
    <location>
        <begin position="799"/>
        <end position="804"/>
    </location>
</feature>
<feature type="strand" evidence="9">
    <location>
        <begin position="818"/>
        <end position="820"/>
    </location>
</feature>
<name>CLPC1_MYCTU</name>
<proteinExistence type="evidence at protein level"/>
<sequence>MFERFTDRARRVVVLAQEEARMLNHNYIGTEHILLGLIHEGEGVAAKSLESLGISLEGVRSQVEEIIGQGQQAPSGHIPFTPRAKKVLELSLREALQLGHNYIGTEHILLGLIREGEGVAAQVLVKLGAELTRVRQQVIQLLSGYQGKEAAEAGTGGRGGESGSPSTSLVLDQFGRNLTAAAMEGKLDPVIGREKEIERVMQVLSRRTKNNPVLIGEPGVGKTAVVEGLAQAIVHGEVPETLKDKQLYTLDLGSLVAGSRYRGDFEERLKKVLKEINTRGDIILFIDELHTLVGAGAAEGAIDAASILKPKLARGELQTIGATTLDEYRKYIEKDAALERRFQPVQVGEPTVEHTIEILKGLRDRYEAHHRVSITDAAMVAAATLADRYINDRFLPDKAIDLIDEAGARMRIRRMTAPPDLREFDEKIAEARREKESAIDAQDFEKAASLRDREKTLVAQRAEREKQWRSGDLDVVAEVDDEQIAEVLGNWTGIPVFKLTEAETTRLLRMEEELHKRIIGQEDAVKAVSKAIRRTRAGLKDPKRPSGSFIFAGPSGVGKTELSKALANFLFGDDDALIQIDMGEFHDRFTASRLFGAPPGYVGYEEGGQLTEKVRRKPFSVVLFDEIEKAHQEIYNSLLQVLEDGRLTDGQGRTVDFKNTVLIFTSNLGTSDISKPVGLGFSKGGGENDYERMKQKVNDELKKHFRPEFLNRIDDIIVFHQLTREEIIRMVDLMISRVAGQLKSKDMALVLTDAAKALLAKRGFDPVLGARPLRRTIQREIEDQLSEKILFEEVGPGQVVTVDVDNWDGEGPGEDAVFTFTGTRKPPAEPDLAKAGAHSAGGPEPAAR</sequence>
<gene>
    <name type="primary">clpC1</name>
    <name type="ordered locus">Rv3596c</name>
    <name type="ORF">MTCY07H7B.26</name>
</gene>
<reference key="1">
    <citation type="journal article" date="1998" name="Nature">
        <title>Deciphering the biology of Mycobacterium tuberculosis from the complete genome sequence.</title>
        <authorList>
            <person name="Cole S.T."/>
            <person name="Brosch R."/>
            <person name="Parkhill J."/>
            <person name="Garnier T."/>
            <person name="Churcher C.M."/>
            <person name="Harris D.E."/>
            <person name="Gordon S.V."/>
            <person name="Eiglmeier K."/>
            <person name="Gas S."/>
            <person name="Barry C.E. III"/>
            <person name="Tekaia F."/>
            <person name="Badcock K."/>
            <person name="Basham D."/>
            <person name="Brown D."/>
            <person name="Chillingworth T."/>
            <person name="Connor R."/>
            <person name="Davies R.M."/>
            <person name="Devlin K."/>
            <person name="Feltwell T."/>
            <person name="Gentles S."/>
            <person name="Hamlin N."/>
            <person name="Holroyd S."/>
            <person name="Hornsby T."/>
            <person name="Jagels K."/>
            <person name="Krogh A."/>
            <person name="McLean J."/>
            <person name="Moule S."/>
            <person name="Murphy L.D."/>
            <person name="Oliver S."/>
            <person name="Osborne J."/>
            <person name="Quail M.A."/>
            <person name="Rajandream M.A."/>
            <person name="Rogers J."/>
            <person name="Rutter S."/>
            <person name="Seeger K."/>
            <person name="Skelton S."/>
            <person name="Squares S."/>
            <person name="Squares R."/>
            <person name="Sulston J.E."/>
            <person name="Taylor K."/>
            <person name="Whitehead S."/>
            <person name="Barrell B.G."/>
        </authorList>
    </citation>
    <scope>NUCLEOTIDE SEQUENCE [LARGE SCALE GENOMIC DNA]</scope>
    <source>
        <strain>ATCC 25618 / H37Rv</strain>
    </source>
</reference>
<reference key="2">
    <citation type="journal article" date="2010" name="Mol. Microbiol.">
        <title>RseA, the SigE specific anti-sigma factor of Mycobacterium tuberculosis, is inactivated by phosphorylation-dependent ClpC1P2 proteolysis.</title>
        <authorList>
            <person name="Barik S."/>
            <person name="Sureka K."/>
            <person name="Mukherjee P."/>
            <person name="Basu J."/>
            <person name="Kundu M."/>
        </authorList>
    </citation>
    <scope>FUNCTION AS A PROTEASE</scope>
    <scope>INTERACTION WITH RSEA</scope>
    <scope>DISRUPTION PHENOTYPE</scope>
    <source>
        <strain>ATCC 25618 / H37Rv</strain>
    </source>
</reference>
<reference key="3">
    <citation type="journal article" date="2011" name="Mol. Cell. Proteomics">
        <title>Proteogenomic analysis of Mycobacterium tuberculosis by high resolution mass spectrometry.</title>
        <authorList>
            <person name="Kelkar D.S."/>
            <person name="Kumar D."/>
            <person name="Kumar P."/>
            <person name="Balakrishnan L."/>
            <person name="Muthusamy B."/>
            <person name="Yadav A.K."/>
            <person name="Shrivastava P."/>
            <person name="Marimuthu A."/>
            <person name="Anand S."/>
            <person name="Sundaram H."/>
            <person name="Kingsbury R."/>
            <person name="Harsha H.C."/>
            <person name="Nair B."/>
            <person name="Prasad T.S."/>
            <person name="Chauhan D.S."/>
            <person name="Katoch K."/>
            <person name="Katoch V.M."/>
            <person name="Kumar P."/>
            <person name="Chaerkady R."/>
            <person name="Ramachandran S."/>
            <person name="Dash D."/>
            <person name="Pandey A."/>
        </authorList>
    </citation>
    <scope>IDENTIFICATION BY MASS SPECTROMETRY [LARGE SCALE ANALYSIS]</scope>
    <source>
        <strain>ATCC 25618 / H37Rv</strain>
    </source>
</reference>
<protein>
    <recommendedName>
        <fullName>ATP-dependent Clp protease ATP-binding subunit ClpC1</fullName>
    </recommendedName>
</protein>
<organism>
    <name type="scientific">Mycobacterium tuberculosis (strain ATCC 25618 / H37Rv)</name>
    <dbReference type="NCBI Taxonomy" id="83332"/>
    <lineage>
        <taxon>Bacteria</taxon>
        <taxon>Bacillati</taxon>
        <taxon>Actinomycetota</taxon>
        <taxon>Actinomycetes</taxon>
        <taxon>Mycobacteriales</taxon>
        <taxon>Mycobacteriaceae</taxon>
        <taxon>Mycobacterium</taxon>
        <taxon>Mycobacterium tuberculosis complex</taxon>
    </lineage>
</organism>